<evidence type="ECO:0000255" key="1">
    <source>
        <dbReference type="HAMAP-Rule" id="MF_00090"/>
    </source>
</evidence>
<evidence type="ECO:0000256" key="2">
    <source>
        <dbReference type="SAM" id="MobiDB-lite"/>
    </source>
</evidence>
<organism>
    <name type="scientific">Cupriavidus necator (strain ATCC 17699 / DSM 428 / KCTC 22496 / NCIMB 10442 / H16 / Stanier 337)</name>
    <name type="common">Ralstonia eutropha</name>
    <dbReference type="NCBI Taxonomy" id="381666"/>
    <lineage>
        <taxon>Bacteria</taxon>
        <taxon>Pseudomonadati</taxon>
        <taxon>Pseudomonadota</taxon>
        <taxon>Betaproteobacteria</taxon>
        <taxon>Burkholderiales</taxon>
        <taxon>Burkholderiaceae</taxon>
        <taxon>Cupriavidus</taxon>
    </lineage>
</organism>
<feature type="chain" id="PRO_0000351917" description="Protein-L-isoaspartate O-methyltransferase 2">
    <location>
        <begin position="1"/>
        <end position="306"/>
    </location>
</feature>
<feature type="region of interest" description="Disordered" evidence="2">
    <location>
        <begin position="1"/>
        <end position="82"/>
    </location>
</feature>
<feature type="compositionally biased region" description="Pro residues" evidence="2">
    <location>
        <begin position="38"/>
        <end position="48"/>
    </location>
</feature>
<feature type="compositionally biased region" description="Low complexity" evidence="2">
    <location>
        <begin position="54"/>
        <end position="77"/>
    </location>
</feature>
<feature type="active site" evidence="1">
    <location>
        <position position="142"/>
    </location>
</feature>
<reference key="1">
    <citation type="journal article" date="2006" name="Nat. Biotechnol.">
        <title>Genome sequence of the bioplastic-producing 'Knallgas' bacterium Ralstonia eutropha H16.</title>
        <authorList>
            <person name="Pohlmann A."/>
            <person name="Fricke W.F."/>
            <person name="Reinecke F."/>
            <person name="Kusian B."/>
            <person name="Liesegang H."/>
            <person name="Cramm R."/>
            <person name="Eitinger T."/>
            <person name="Ewering C."/>
            <person name="Poetter M."/>
            <person name="Schwartz E."/>
            <person name="Strittmatter A."/>
            <person name="Voss I."/>
            <person name="Gottschalk G."/>
            <person name="Steinbuechel A."/>
            <person name="Friedrich B."/>
            <person name="Bowien B."/>
        </authorList>
    </citation>
    <scope>NUCLEOTIDE SEQUENCE [LARGE SCALE GENOMIC DNA]</scope>
    <source>
        <strain>ATCC 17699 / DSM 428 / KCTC 22496 / NCIMB 10442 / H16 / Stanier 337</strain>
    </source>
</reference>
<comment type="function">
    <text evidence="1">Catalyzes the methyl esterification of L-isoaspartyl residues in peptides and proteins that result from spontaneous decomposition of normal L-aspartyl and L-asparaginyl residues. It plays a role in the repair and/or degradation of damaged proteins.</text>
</comment>
<comment type="catalytic activity">
    <reaction evidence="1">
        <text>[protein]-L-isoaspartate + S-adenosyl-L-methionine = [protein]-L-isoaspartate alpha-methyl ester + S-adenosyl-L-homocysteine</text>
        <dbReference type="Rhea" id="RHEA:12705"/>
        <dbReference type="Rhea" id="RHEA-COMP:12143"/>
        <dbReference type="Rhea" id="RHEA-COMP:12144"/>
        <dbReference type="ChEBI" id="CHEBI:57856"/>
        <dbReference type="ChEBI" id="CHEBI:59789"/>
        <dbReference type="ChEBI" id="CHEBI:90596"/>
        <dbReference type="ChEBI" id="CHEBI:90598"/>
        <dbReference type="EC" id="2.1.1.77"/>
    </reaction>
</comment>
<comment type="subcellular location">
    <subcellularLocation>
        <location evidence="1">Cytoplasm</location>
    </subcellularLocation>
</comment>
<comment type="similarity">
    <text evidence="1">Belongs to the methyltransferase superfamily. L-isoaspartyl/D-aspartyl protein methyltransferase family.</text>
</comment>
<gene>
    <name evidence="1" type="primary">pcm2</name>
    <name type="ordered locus">H16_A2375</name>
</gene>
<sequence>MSTTPPRNKFPLPLDAVVERKPAPARTAGLPAVGTPRPAAPTPAPAKPAKPRLPRTAAPAPAPVPASAVEQRASAATAGGGGMASARARAALAARLRAAGIRDERVLSAIATVPRHLFVEPGLASQAYEDAALPIGHQQTISKPSVVARMIELLREGLAADAPLERVLEIGTGCGYQAAVLSQVAREVFSIERIRPLHEQAKANLRPLRVPNLRLHYGDGMLGLPQAAPFSAIILAAAGMEVPEALLEQLAIGGRLIAPVAVMPPAGVPGQTVTQQLLLIERRNRHRFHRTALEAVFFVPLKSGTI</sequence>
<dbReference type="EC" id="2.1.1.77" evidence="1"/>
<dbReference type="EMBL" id="AM260479">
    <property type="protein sequence ID" value="CAJ93470.1"/>
    <property type="molecule type" value="Genomic_DNA"/>
</dbReference>
<dbReference type="RefSeq" id="WP_011615630.1">
    <property type="nucleotide sequence ID" value="NC_008313.1"/>
</dbReference>
<dbReference type="SMR" id="Q0K951"/>
<dbReference type="STRING" id="381666.H16_A2375"/>
<dbReference type="KEGG" id="reh:H16_A2375"/>
<dbReference type="PATRIC" id="fig|381666.6.peg.2784"/>
<dbReference type="eggNOG" id="COG2518">
    <property type="taxonomic scope" value="Bacteria"/>
</dbReference>
<dbReference type="HOGENOM" id="CLU_055432_1_0_4"/>
<dbReference type="OrthoDB" id="9810066at2"/>
<dbReference type="Proteomes" id="UP000008210">
    <property type="component" value="Chromosome 1"/>
</dbReference>
<dbReference type="GO" id="GO:0005737">
    <property type="term" value="C:cytoplasm"/>
    <property type="evidence" value="ECO:0007669"/>
    <property type="project" value="UniProtKB-SubCell"/>
</dbReference>
<dbReference type="GO" id="GO:0004719">
    <property type="term" value="F:protein-L-isoaspartate (D-aspartate) O-methyltransferase activity"/>
    <property type="evidence" value="ECO:0007669"/>
    <property type="project" value="UniProtKB-UniRule"/>
</dbReference>
<dbReference type="GO" id="GO:0032259">
    <property type="term" value="P:methylation"/>
    <property type="evidence" value="ECO:0007669"/>
    <property type="project" value="UniProtKB-KW"/>
</dbReference>
<dbReference type="GO" id="GO:0036211">
    <property type="term" value="P:protein modification process"/>
    <property type="evidence" value="ECO:0007669"/>
    <property type="project" value="UniProtKB-UniRule"/>
</dbReference>
<dbReference type="GO" id="GO:0030091">
    <property type="term" value="P:protein repair"/>
    <property type="evidence" value="ECO:0007669"/>
    <property type="project" value="UniProtKB-UniRule"/>
</dbReference>
<dbReference type="CDD" id="cd02440">
    <property type="entry name" value="AdoMet_MTases"/>
    <property type="match status" value="1"/>
</dbReference>
<dbReference type="FunFam" id="3.40.50.150:FF:000010">
    <property type="entry name" value="Protein-L-isoaspartate O-methyltransferase"/>
    <property type="match status" value="1"/>
</dbReference>
<dbReference type="Gene3D" id="3.40.50.150">
    <property type="entry name" value="Vaccinia Virus protein VP39"/>
    <property type="match status" value="1"/>
</dbReference>
<dbReference type="HAMAP" id="MF_00090">
    <property type="entry name" value="PIMT"/>
    <property type="match status" value="1"/>
</dbReference>
<dbReference type="InterPro" id="IPR000682">
    <property type="entry name" value="PCMT"/>
</dbReference>
<dbReference type="InterPro" id="IPR029063">
    <property type="entry name" value="SAM-dependent_MTases_sf"/>
</dbReference>
<dbReference type="NCBIfam" id="TIGR00080">
    <property type="entry name" value="pimt"/>
    <property type="match status" value="1"/>
</dbReference>
<dbReference type="NCBIfam" id="NF001453">
    <property type="entry name" value="PRK00312.1"/>
    <property type="match status" value="1"/>
</dbReference>
<dbReference type="PANTHER" id="PTHR11579">
    <property type="entry name" value="PROTEIN-L-ISOASPARTATE O-METHYLTRANSFERASE"/>
    <property type="match status" value="1"/>
</dbReference>
<dbReference type="PANTHER" id="PTHR11579:SF0">
    <property type="entry name" value="PROTEIN-L-ISOASPARTATE(D-ASPARTATE) O-METHYLTRANSFERASE"/>
    <property type="match status" value="1"/>
</dbReference>
<dbReference type="Pfam" id="PF01135">
    <property type="entry name" value="PCMT"/>
    <property type="match status" value="1"/>
</dbReference>
<dbReference type="SUPFAM" id="SSF53335">
    <property type="entry name" value="S-adenosyl-L-methionine-dependent methyltransferases"/>
    <property type="match status" value="1"/>
</dbReference>
<dbReference type="PROSITE" id="PS01279">
    <property type="entry name" value="PCMT"/>
    <property type="match status" value="1"/>
</dbReference>
<keyword id="KW-0963">Cytoplasm</keyword>
<keyword id="KW-0489">Methyltransferase</keyword>
<keyword id="KW-1185">Reference proteome</keyword>
<keyword id="KW-0949">S-adenosyl-L-methionine</keyword>
<keyword id="KW-0808">Transferase</keyword>
<protein>
    <recommendedName>
        <fullName evidence="1">Protein-L-isoaspartate O-methyltransferase 2</fullName>
        <ecNumber evidence="1">2.1.1.77</ecNumber>
    </recommendedName>
    <alternativeName>
        <fullName evidence="1">L-isoaspartyl protein carboxyl methyltransferase 2</fullName>
    </alternativeName>
    <alternativeName>
        <fullName evidence="1">Protein L-isoaspartyl methyltransferase 2</fullName>
    </alternativeName>
    <alternativeName>
        <fullName evidence="1">Protein-beta-aspartate methyltransferase 2</fullName>
        <shortName evidence="1">PIMT 2</shortName>
    </alternativeName>
</protein>
<proteinExistence type="inferred from homology"/>
<accession>Q0K951</accession>
<name>PIMT2_CUPNH</name>